<evidence type="ECO:0000255" key="1">
    <source>
        <dbReference type="HAMAP-Rule" id="MF_01658"/>
    </source>
</evidence>
<accession>A4IY33</accession>
<name>COQ7_FRATW</name>
<sequence>MRKLSFLDRVIEELDSYARFTKVPLNPSKKSPSSDTIDGKLSEIEKKHSAGLMRVDYTGEICAQGLYRGQASVAKSPQTKEHLYHAAAEEYDHLAWCGERLQELGARPSLLNPFWYWTSFGIGAVAGSISDSLSYGFVVETEKQVMKHLDSHLKSLPVNDNRSREILKQMYIDESEHAVEAEKAGGKKLPKTVKAIMKLQSKVMTTLAYRF</sequence>
<reference key="1">
    <citation type="journal article" date="2007" name="PLoS ONE">
        <title>Complete genomic characterization of a pathogenic A.II strain of Francisella tularensis subspecies tularensis.</title>
        <authorList>
            <person name="Beckstrom-Sternberg S.M."/>
            <person name="Auerbach R.K."/>
            <person name="Godbole S."/>
            <person name="Pearson J.V."/>
            <person name="Beckstrom-Sternberg J.S."/>
            <person name="Deng Z."/>
            <person name="Munk C."/>
            <person name="Kubota K."/>
            <person name="Zhou Y."/>
            <person name="Bruce D."/>
            <person name="Noronha J."/>
            <person name="Scheuermann R.H."/>
            <person name="Wang A."/>
            <person name="Wei X."/>
            <person name="Wang J."/>
            <person name="Hao J."/>
            <person name="Wagner D.M."/>
            <person name="Brettin T.S."/>
            <person name="Brown N."/>
            <person name="Gilna P."/>
            <person name="Keim P.S."/>
        </authorList>
    </citation>
    <scope>NUCLEOTIDE SEQUENCE [LARGE SCALE GENOMIC DNA]</scope>
    <source>
        <strain>WY96-3418</strain>
    </source>
</reference>
<comment type="function">
    <text evidence="1">Catalyzes the hydroxylation of 2-nonaprenyl-3-methyl-6-methoxy-1,4-benzoquinol during ubiquinone biosynthesis.</text>
</comment>
<comment type="catalytic activity">
    <reaction evidence="1">
        <text>a 5-methoxy-2-methyl-3-(all-trans-polyprenyl)benzene-1,4-diol + AH2 + O2 = a 3-demethylubiquinol + A + H2O</text>
        <dbReference type="Rhea" id="RHEA:50908"/>
        <dbReference type="Rhea" id="RHEA-COMP:10859"/>
        <dbReference type="Rhea" id="RHEA-COMP:10914"/>
        <dbReference type="ChEBI" id="CHEBI:13193"/>
        <dbReference type="ChEBI" id="CHEBI:15377"/>
        <dbReference type="ChEBI" id="CHEBI:15379"/>
        <dbReference type="ChEBI" id="CHEBI:17499"/>
        <dbReference type="ChEBI" id="CHEBI:84167"/>
        <dbReference type="ChEBI" id="CHEBI:84422"/>
        <dbReference type="EC" id="1.14.99.60"/>
    </reaction>
</comment>
<comment type="cofactor">
    <cofactor evidence="1">
        <name>Fe cation</name>
        <dbReference type="ChEBI" id="CHEBI:24875"/>
    </cofactor>
    <text evidence="1">Binds 2 iron ions per subunit.</text>
</comment>
<comment type="pathway">
    <text evidence="1">Cofactor biosynthesis; ubiquinone biosynthesis.</text>
</comment>
<comment type="subcellular location">
    <subcellularLocation>
        <location evidence="1">Cell membrane</location>
        <topology evidence="1">Peripheral membrane protein</topology>
    </subcellularLocation>
</comment>
<comment type="similarity">
    <text evidence="1">Belongs to the COQ7 family.</text>
</comment>
<dbReference type="EC" id="1.14.99.60" evidence="1"/>
<dbReference type="EMBL" id="CP000608">
    <property type="protein sequence ID" value="ABO46834.1"/>
    <property type="molecule type" value="Genomic_DNA"/>
</dbReference>
<dbReference type="RefSeq" id="WP_003018903.1">
    <property type="nucleotide sequence ID" value="NC_009257.1"/>
</dbReference>
<dbReference type="SMR" id="A4IY33"/>
<dbReference type="KEGG" id="ftw:FTW_1005"/>
<dbReference type="HOGENOM" id="CLU_088601_0_0_6"/>
<dbReference type="UniPathway" id="UPA00232"/>
<dbReference type="GO" id="GO:0005886">
    <property type="term" value="C:plasma membrane"/>
    <property type="evidence" value="ECO:0007669"/>
    <property type="project" value="UniProtKB-SubCell"/>
</dbReference>
<dbReference type="GO" id="GO:0008682">
    <property type="term" value="F:3-demethoxyubiquinol 3-hydroxylase activity"/>
    <property type="evidence" value="ECO:0007669"/>
    <property type="project" value="UniProtKB-EC"/>
</dbReference>
<dbReference type="GO" id="GO:0046872">
    <property type="term" value="F:metal ion binding"/>
    <property type="evidence" value="ECO:0007669"/>
    <property type="project" value="UniProtKB-KW"/>
</dbReference>
<dbReference type="GO" id="GO:0006744">
    <property type="term" value="P:ubiquinone biosynthetic process"/>
    <property type="evidence" value="ECO:0007669"/>
    <property type="project" value="UniProtKB-UniRule"/>
</dbReference>
<dbReference type="CDD" id="cd01042">
    <property type="entry name" value="DMQH"/>
    <property type="match status" value="1"/>
</dbReference>
<dbReference type="Gene3D" id="1.20.1260.10">
    <property type="match status" value="1"/>
</dbReference>
<dbReference type="HAMAP" id="MF_01658">
    <property type="entry name" value="COQ7"/>
    <property type="match status" value="1"/>
</dbReference>
<dbReference type="InterPro" id="IPR047809">
    <property type="entry name" value="COQ7_proteobact"/>
</dbReference>
<dbReference type="InterPro" id="IPR012347">
    <property type="entry name" value="Ferritin-like"/>
</dbReference>
<dbReference type="InterPro" id="IPR009078">
    <property type="entry name" value="Ferritin-like_SF"/>
</dbReference>
<dbReference type="InterPro" id="IPR011566">
    <property type="entry name" value="Ubq_synth_Coq7"/>
</dbReference>
<dbReference type="NCBIfam" id="NF033656">
    <property type="entry name" value="DMQ_monoox_COQ7"/>
    <property type="match status" value="1"/>
</dbReference>
<dbReference type="PANTHER" id="PTHR11237:SF4">
    <property type="entry name" value="5-DEMETHOXYUBIQUINONE HYDROXYLASE, MITOCHONDRIAL"/>
    <property type="match status" value="1"/>
</dbReference>
<dbReference type="PANTHER" id="PTHR11237">
    <property type="entry name" value="COENZYME Q10 BIOSYNTHESIS PROTEIN 7"/>
    <property type="match status" value="1"/>
</dbReference>
<dbReference type="Pfam" id="PF03232">
    <property type="entry name" value="COQ7"/>
    <property type="match status" value="1"/>
</dbReference>
<dbReference type="SUPFAM" id="SSF47240">
    <property type="entry name" value="Ferritin-like"/>
    <property type="match status" value="1"/>
</dbReference>
<gene>
    <name evidence="1" type="primary">coq7</name>
    <name type="ordered locus">FTW_1005</name>
</gene>
<organism>
    <name type="scientific">Francisella tularensis subsp. tularensis (strain WY96-3418)</name>
    <dbReference type="NCBI Taxonomy" id="418136"/>
    <lineage>
        <taxon>Bacteria</taxon>
        <taxon>Pseudomonadati</taxon>
        <taxon>Pseudomonadota</taxon>
        <taxon>Gammaproteobacteria</taxon>
        <taxon>Thiotrichales</taxon>
        <taxon>Francisellaceae</taxon>
        <taxon>Francisella</taxon>
    </lineage>
</organism>
<feature type="chain" id="PRO_0000338690" description="3-demethoxyubiquinol 3-hydroxylase">
    <location>
        <begin position="1"/>
        <end position="211"/>
    </location>
</feature>
<feature type="binding site" evidence="1">
    <location>
        <position position="60"/>
    </location>
    <ligand>
        <name>Fe cation</name>
        <dbReference type="ChEBI" id="CHEBI:24875"/>
        <label>1</label>
    </ligand>
</feature>
<feature type="binding site" evidence="1">
    <location>
        <position position="90"/>
    </location>
    <ligand>
        <name>Fe cation</name>
        <dbReference type="ChEBI" id="CHEBI:24875"/>
        <label>1</label>
    </ligand>
</feature>
<feature type="binding site" evidence="1">
    <location>
        <position position="90"/>
    </location>
    <ligand>
        <name>Fe cation</name>
        <dbReference type="ChEBI" id="CHEBI:24875"/>
        <label>2</label>
    </ligand>
</feature>
<feature type="binding site" evidence="1">
    <location>
        <position position="93"/>
    </location>
    <ligand>
        <name>Fe cation</name>
        <dbReference type="ChEBI" id="CHEBI:24875"/>
        <label>1</label>
    </ligand>
</feature>
<feature type="binding site" evidence="1">
    <location>
        <position position="142"/>
    </location>
    <ligand>
        <name>Fe cation</name>
        <dbReference type="ChEBI" id="CHEBI:24875"/>
        <label>2</label>
    </ligand>
</feature>
<feature type="binding site" evidence="1">
    <location>
        <position position="174"/>
    </location>
    <ligand>
        <name>Fe cation</name>
        <dbReference type="ChEBI" id="CHEBI:24875"/>
        <label>1</label>
    </ligand>
</feature>
<feature type="binding site" evidence="1">
    <location>
        <position position="174"/>
    </location>
    <ligand>
        <name>Fe cation</name>
        <dbReference type="ChEBI" id="CHEBI:24875"/>
        <label>2</label>
    </ligand>
</feature>
<feature type="binding site" evidence="1">
    <location>
        <position position="177"/>
    </location>
    <ligand>
        <name>Fe cation</name>
        <dbReference type="ChEBI" id="CHEBI:24875"/>
        <label>2</label>
    </ligand>
</feature>
<proteinExistence type="inferred from homology"/>
<protein>
    <recommendedName>
        <fullName evidence="1">3-demethoxyubiquinol 3-hydroxylase</fullName>
        <shortName evidence="1">DMQ hydroxylase</shortName>
        <ecNumber evidence="1">1.14.99.60</ecNumber>
    </recommendedName>
    <alternativeName>
        <fullName evidence="1">2-nonaprenyl-3-methyl-6-methoxy-1,4-benzoquinol hydroxylase</fullName>
    </alternativeName>
</protein>
<keyword id="KW-1003">Cell membrane</keyword>
<keyword id="KW-0408">Iron</keyword>
<keyword id="KW-0472">Membrane</keyword>
<keyword id="KW-0479">Metal-binding</keyword>
<keyword id="KW-0503">Monooxygenase</keyword>
<keyword id="KW-0560">Oxidoreductase</keyword>
<keyword id="KW-0831">Ubiquinone biosynthesis</keyword>